<dbReference type="EMBL" id="AM920689">
    <property type="protein sequence ID" value="CAP53165.1"/>
    <property type="molecule type" value="Genomic_DNA"/>
</dbReference>
<dbReference type="SMR" id="B0RWC6"/>
<dbReference type="KEGG" id="xca:xcc-b100_3798"/>
<dbReference type="HOGENOM" id="CLU_079215_4_5_6"/>
<dbReference type="Proteomes" id="UP000001188">
    <property type="component" value="Chromosome"/>
</dbReference>
<dbReference type="GO" id="GO:0005886">
    <property type="term" value="C:plasma membrane"/>
    <property type="evidence" value="ECO:0007669"/>
    <property type="project" value="UniProtKB-SubCell"/>
</dbReference>
<dbReference type="GO" id="GO:0045259">
    <property type="term" value="C:proton-transporting ATP synthase complex"/>
    <property type="evidence" value="ECO:0007669"/>
    <property type="project" value="UniProtKB-KW"/>
</dbReference>
<dbReference type="GO" id="GO:0046933">
    <property type="term" value="F:proton-transporting ATP synthase activity, rotational mechanism"/>
    <property type="evidence" value="ECO:0007669"/>
    <property type="project" value="UniProtKB-UniRule"/>
</dbReference>
<dbReference type="GO" id="GO:0046961">
    <property type="term" value="F:proton-transporting ATPase activity, rotational mechanism"/>
    <property type="evidence" value="ECO:0007669"/>
    <property type="project" value="TreeGrafter"/>
</dbReference>
<dbReference type="CDD" id="cd06503">
    <property type="entry name" value="ATP-synt_Fo_b"/>
    <property type="match status" value="1"/>
</dbReference>
<dbReference type="Gene3D" id="6.10.250.1580">
    <property type="match status" value="1"/>
</dbReference>
<dbReference type="HAMAP" id="MF_01398">
    <property type="entry name" value="ATP_synth_b_bprime"/>
    <property type="match status" value="1"/>
</dbReference>
<dbReference type="InterPro" id="IPR028987">
    <property type="entry name" value="ATP_synth_B-like_membr_sf"/>
</dbReference>
<dbReference type="InterPro" id="IPR002146">
    <property type="entry name" value="ATP_synth_b/b'su_bac/chlpt"/>
</dbReference>
<dbReference type="InterPro" id="IPR005864">
    <property type="entry name" value="ATP_synth_F0_bsu_bac"/>
</dbReference>
<dbReference type="InterPro" id="IPR050059">
    <property type="entry name" value="ATP_synthase_B_chain"/>
</dbReference>
<dbReference type="NCBIfam" id="TIGR01144">
    <property type="entry name" value="ATP_synt_b"/>
    <property type="match status" value="1"/>
</dbReference>
<dbReference type="NCBIfam" id="NF004411">
    <property type="entry name" value="PRK05759.1-2"/>
    <property type="match status" value="1"/>
</dbReference>
<dbReference type="PANTHER" id="PTHR33445:SF1">
    <property type="entry name" value="ATP SYNTHASE SUBUNIT B"/>
    <property type="match status" value="1"/>
</dbReference>
<dbReference type="PANTHER" id="PTHR33445">
    <property type="entry name" value="ATP SYNTHASE SUBUNIT B', CHLOROPLASTIC"/>
    <property type="match status" value="1"/>
</dbReference>
<dbReference type="Pfam" id="PF00430">
    <property type="entry name" value="ATP-synt_B"/>
    <property type="match status" value="1"/>
</dbReference>
<dbReference type="SUPFAM" id="SSF81573">
    <property type="entry name" value="F1F0 ATP synthase subunit B, membrane domain"/>
    <property type="match status" value="1"/>
</dbReference>
<protein>
    <recommendedName>
        <fullName evidence="1">ATP synthase subunit b</fullName>
    </recommendedName>
    <alternativeName>
        <fullName evidence="1">ATP synthase F(0) sector subunit b</fullName>
    </alternativeName>
    <alternativeName>
        <fullName evidence="1">ATPase subunit I</fullName>
    </alternativeName>
    <alternativeName>
        <fullName evidence="1">F-type ATPase subunit b</fullName>
        <shortName evidence="1">F-ATPase subunit b</shortName>
    </alternativeName>
</protein>
<organism>
    <name type="scientific">Xanthomonas campestris pv. campestris (strain B100)</name>
    <dbReference type="NCBI Taxonomy" id="509169"/>
    <lineage>
        <taxon>Bacteria</taxon>
        <taxon>Pseudomonadati</taxon>
        <taxon>Pseudomonadota</taxon>
        <taxon>Gammaproteobacteria</taxon>
        <taxon>Lysobacterales</taxon>
        <taxon>Lysobacteraceae</taxon>
        <taxon>Xanthomonas</taxon>
    </lineage>
</organism>
<gene>
    <name evidence="1" type="primary">atpF</name>
    <name type="ordered locus">xcc-b100_3798</name>
</gene>
<proteinExistence type="inferred from homology"/>
<accession>B0RWC6</accession>
<reference key="1">
    <citation type="journal article" date="2008" name="J. Biotechnol.">
        <title>The genome of Xanthomonas campestris pv. campestris B100 and its use for the reconstruction of metabolic pathways involved in xanthan biosynthesis.</title>
        <authorList>
            <person name="Vorhoelter F.-J."/>
            <person name="Schneiker S."/>
            <person name="Goesmann A."/>
            <person name="Krause L."/>
            <person name="Bekel T."/>
            <person name="Kaiser O."/>
            <person name="Linke B."/>
            <person name="Patschkowski T."/>
            <person name="Rueckert C."/>
            <person name="Schmid J."/>
            <person name="Sidhu V.K."/>
            <person name="Sieber V."/>
            <person name="Tauch A."/>
            <person name="Watt S.A."/>
            <person name="Weisshaar B."/>
            <person name="Becker A."/>
            <person name="Niehaus K."/>
            <person name="Puehler A."/>
        </authorList>
    </citation>
    <scope>NUCLEOTIDE SEQUENCE [LARGE SCALE GENOMIC DNA]</scope>
    <source>
        <strain>B100</strain>
    </source>
</reference>
<keyword id="KW-0066">ATP synthesis</keyword>
<keyword id="KW-0997">Cell inner membrane</keyword>
<keyword id="KW-1003">Cell membrane</keyword>
<keyword id="KW-0138">CF(0)</keyword>
<keyword id="KW-0375">Hydrogen ion transport</keyword>
<keyword id="KW-0406">Ion transport</keyword>
<keyword id="KW-0472">Membrane</keyword>
<keyword id="KW-0812">Transmembrane</keyword>
<keyword id="KW-1133">Transmembrane helix</keyword>
<keyword id="KW-0813">Transport</keyword>
<sequence>MDITLTIFAQALAFAGLIWIVATKIWPPLLKAIEERQQKIAEGLAAADRSQKDLAQAQEKVNEALKDARTKANEIIDQAHARANQIIEAAKLEAIAEANRQKDLAQAEIDASATRAREELRRQVSSLAVSGAEKLLKREIDATAHKALLDELAAEI</sequence>
<evidence type="ECO:0000255" key="1">
    <source>
        <dbReference type="HAMAP-Rule" id="MF_01398"/>
    </source>
</evidence>
<name>ATPF_XANCB</name>
<comment type="function">
    <text evidence="1">F(1)F(0) ATP synthase produces ATP from ADP in the presence of a proton or sodium gradient. F-type ATPases consist of two structural domains, F(1) containing the extramembraneous catalytic core and F(0) containing the membrane proton channel, linked together by a central stalk and a peripheral stalk. During catalysis, ATP synthesis in the catalytic domain of F(1) is coupled via a rotary mechanism of the central stalk subunits to proton translocation.</text>
</comment>
<comment type="function">
    <text evidence="1">Component of the F(0) channel, it forms part of the peripheral stalk, linking F(1) to F(0).</text>
</comment>
<comment type="subunit">
    <text evidence="1">F-type ATPases have 2 components, F(1) - the catalytic core - and F(0) - the membrane proton channel. F(1) has five subunits: alpha(3), beta(3), gamma(1), delta(1), epsilon(1). F(0) has three main subunits: a(1), b(2) and c(10-14). The alpha and beta chains form an alternating ring which encloses part of the gamma chain. F(1) is attached to F(0) by a central stalk formed by the gamma and epsilon chains, while a peripheral stalk is formed by the delta and b chains.</text>
</comment>
<comment type="subcellular location">
    <subcellularLocation>
        <location evidence="1">Cell inner membrane</location>
        <topology evidence="1">Single-pass membrane protein</topology>
    </subcellularLocation>
</comment>
<comment type="similarity">
    <text evidence="1">Belongs to the ATPase B chain family.</text>
</comment>
<feature type="chain" id="PRO_0000368869" description="ATP synthase subunit b">
    <location>
        <begin position="1"/>
        <end position="156"/>
    </location>
</feature>
<feature type="transmembrane region" description="Helical" evidence="1">
    <location>
        <begin position="3"/>
        <end position="23"/>
    </location>
</feature>